<reference key="1">
    <citation type="journal article" date="2009" name="PLoS Genet.">
        <title>Organised genome dynamics in the Escherichia coli species results in highly diverse adaptive paths.</title>
        <authorList>
            <person name="Touchon M."/>
            <person name="Hoede C."/>
            <person name="Tenaillon O."/>
            <person name="Barbe V."/>
            <person name="Baeriswyl S."/>
            <person name="Bidet P."/>
            <person name="Bingen E."/>
            <person name="Bonacorsi S."/>
            <person name="Bouchier C."/>
            <person name="Bouvet O."/>
            <person name="Calteau A."/>
            <person name="Chiapello H."/>
            <person name="Clermont O."/>
            <person name="Cruveiller S."/>
            <person name="Danchin A."/>
            <person name="Diard M."/>
            <person name="Dossat C."/>
            <person name="Karoui M.E."/>
            <person name="Frapy E."/>
            <person name="Garry L."/>
            <person name="Ghigo J.M."/>
            <person name="Gilles A.M."/>
            <person name="Johnson J."/>
            <person name="Le Bouguenec C."/>
            <person name="Lescat M."/>
            <person name="Mangenot S."/>
            <person name="Martinez-Jehanne V."/>
            <person name="Matic I."/>
            <person name="Nassif X."/>
            <person name="Oztas S."/>
            <person name="Petit M.A."/>
            <person name="Pichon C."/>
            <person name="Rouy Z."/>
            <person name="Ruf C.S."/>
            <person name="Schneider D."/>
            <person name="Tourret J."/>
            <person name="Vacherie B."/>
            <person name="Vallenet D."/>
            <person name="Medigue C."/>
            <person name="Rocha E.P.C."/>
            <person name="Denamur E."/>
        </authorList>
    </citation>
    <scope>NUCLEOTIDE SEQUENCE [LARGE SCALE GENOMIC DNA]</scope>
    <source>
        <strain>IAI39 / ExPEC</strain>
    </source>
</reference>
<comment type="similarity">
    <text evidence="1">Belongs to the UPF0758 family. YicR subfamily.</text>
</comment>
<accession>B7NPZ9</accession>
<keyword id="KW-0378">Hydrolase</keyword>
<keyword id="KW-0479">Metal-binding</keyword>
<keyword id="KW-0482">Metalloprotease</keyword>
<keyword id="KW-0645">Protease</keyword>
<keyword id="KW-0862">Zinc</keyword>
<sequence>MKNNAQLLMPREKMLKFGISALTDVELLALFLRTGTRGKDVLTLAKEMLENFGSLYGLLTSEYEQFSGVHGIGVAKFAQLKGIAELARRYYNVRMREESPLLSPEMTREFLQSQLTGEEREIFMVIFLDSQHRVITHSRLFSGTLNHVEVHPREIIREAIKINASALILAHNHPSGCAEPSKADKLITERIIKSCQFMDLRVLDHIVIGRGEYVSFAERGWI</sequence>
<dbReference type="EMBL" id="CU928164">
    <property type="protein sequence ID" value="CAR20264.1"/>
    <property type="molecule type" value="Genomic_DNA"/>
</dbReference>
<dbReference type="RefSeq" id="YP_002410033.1">
    <property type="nucleotide sequence ID" value="NC_011750.1"/>
</dbReference>
<dbReference type="SMR" id="B7NPZ9"/>
<dbReference type="STRING" id="585057.ECIAI39_4156"/>
<dbReference type="KEGG" id="ect:ECIAI39_4156"/>
<dbReference type="PATRIC" id="fig|585057.6.peg.4307"/>
<dbReference type="HOGENOM" id="CLU_073529_0_1_6"/>
<dbReference type="Proteomes" id="UP000000749">
    <property type="component" value="Chromosome"/>
</dbReference>
<dbReference type="GO" id="GO:0046872">
    <property type="term" value="F:metal ion binding"/>
    <property type="evidence" value="ECO:0007669"/>
    <property type="project" value="UniProtKB-KW"/>
</dbReference>
<dbReference type="GO" id="GO:0008237">
    <property type="term" value="F:metallopeptidase activity"/>
    <property type="evidence" value="ECO:0007669"/>
    <property type="project" value="UniProtKB-KW"/>
</dbReference>
<dbReference type="GO" id="GO:0006508">
    <property type="term" value="P:proteolysis"/>
    <property type="evidence" value="ECO:0007669"/>
    <property type="project" value="UniProtKB-KW"/>
</dbReference>
<dbReference type="CDD" id="cd08071">
    <property type="entry name" value="MPN_DUF2466"/>
    <property type="match status" value="1"/>
</dbReference>
<dbReference type="Gene3D" id="3.40.140.10">
    <property type="entry name" value="Cytidine Deaminase, domain 2"/>
    <property type="match status" value="1"/>
</dbReference>
<dbReference type="HAMAP" id="MF_00018">
    <property type="entry name" value="UPF0758_YicR"/>
    <property type="match status" value="1"/>
</dbReference>
<dbReference type="InterPro" id="IPR037518">
    <property type="entry name" value="MPN"/>
</dbReference>
<dbReference type="InterPro" id="IPR025657">
    <property type="entry name" value="RadC_JAB"/>
</dbReference>
<dbReference type="InterPro" id="IPR010994">
    <property type="entry name" value="RuvA_2-like"/>
</dbReference>
<dbReference type="InterPro" id="IPR001405">
    <property type="entry name" value="UPF0758"/>
</dbReference>
<dbReference type="InterPro" id="IPR020891">
    <property type="entry name" value="UPF0758_CS"/>
</dbReference>
<dbReference type="InterPro" id="IPR046778">
    <property type="entry name" value="UPF0758_N"/>
</dbReference>
<dbReference type="InterPro" id="IPR022820">
    <property type="entry name" value="UPF0758_YicR"/>
</dbReference>
<dbReference type="NCBIfam" id="NF000642">
    <property type="entry name" value="PRK00024.1"/>
    <property type="match status" value="1"/>
</dbReference>
<dbReference type="NCBIfam" id="TIGR00608">
    <property type="entry name" value="radc"/>
    <property type="match status" value="1"/>
</dbReference>
<dbReference type="PANTHER" id="PTHR30471">
    <property type="entry name" value="DNA REPAIR PROTEIN RADC"/>
    <property type="match status" value="1"/>
</dbReference>
<dbReference type="PANTHER" id="PTHR30471:SF3">
    <property type="entry name" value="UPF0758 PROTEIN YEES-RELATED"/>
    <property type="match status" value="1"/>
</dbReference>
<dbReference type="Pfam" id="PF04002">
    <property type="entry name" value="RadC"/>
    <property type="match status" value="1"/>
</dbReference>
<dbReference type="Pfam" id="PF20582">
    <property type="entry name" value="UPF0758_N"/>
    <property type="match status" value="1"/>
</dbReference>
<dbReference type="SUPFAM" id="SSF47781">
    <property type="entry name" value="RuvA domain 2-like"/>
    <property type="match status" value="1"/>
</dbReference>
<dbReference type="PROSITE" id="PS50249">
    <property type="entry name" value="MPN"/>
    <property type="match status" value="1"/>
</dbReference>
<dbReference type="PROSITE" id="PS01302">
    <property type="entry name" value="UPF0758"/>
    <property type="match status" value="1"/>
</dbReference>
<organism>
    <name type="scientific">Escherichia coli O7:K1 (strain IAI39 / ExPEC)</name>
    <dbReference type="NCBI Taxonomy" id="585057"/>
    <lineage>
        <taxon>Bacteria</taxon>
        <taxon>Pseudomonadati</taxon>
        <taxon>Pseudomonadota</taxon>
        <taxon>Gammaproteobacteria</taxon>
        <taxon>Enterobacterales</taxon>
        <taxon>Enterobacteriaceae</taxon>
        <taxon>Escherichia</taxon>
    </lineage>
</organism>
<protein>
    <recommendedName>
        <fullName evidence="1">UPF0758 protein YicR</fullName>
    </recommendedName>
</protein>
<name>YICR_ECO7I</name>
<proteinExistence type="inferred from homology"/>
<gene>
    <name evidence="1" type="primary">yicR</name>
    <name type="ordered locus">ECIAI39_4156</name>
</gene>
<feature type="chain" id="PRO_1000116355" description="UPF0758 protein YicR">
    <location>
        <begin position="1"/>
        <end position="222"/>
    </location>
</feature>
<feature type="domain" description="MPN" evidence="2">
    <location>
        <begin position="100"/>
        <end position="222"/>
    </location>
</feature>
<feature type="short sequence motif" description="JAMM motif" evidence="2">
    <location>
        <begin position="171"/>
        <end position="184"/>
    </location>
</feature>
<feature type="binding site" evidence="2">
    <location>
        <position position="171"/>
    </location>
    <ligand>
        <name>Zn(2+)</name>
        <dbReference type="ChEBI" id="CHEBI:29105"/>
        <note>catalytic</note>
    </ligand>
</feature>
<feature type="binding site" evidence="2">
    <location>
        <position position="173"/>
    </location>
    <ligand>
        <name>Zn(2+)</name>
        <dbReference type="ChEBI" id="CHEBI:29105"/>
        <note>catalytic</note>
    </ligand>
</feature>
<feature type="binding site" evidence="2">
    <location>
        <position position="184"/>
    </location>
    <ligand>
        <name>Zn(2+)</name>
        <dbReference type="ChEBI" id="CHEBI:29105"/>
        <note>catalytic</note>
    </ligand>
</feature>
<evidence type="ECO:0000255" key="1">
    <source>
        <dbReference type="HAMAP-Rule" id="MF_00018"/>
    </source>
</evidence>
<evidence type="ECO:0000255" key="2">
    <source>
        <dbReference type="PROSITE-ProRule" id="PRU01182"/>
    </source>
</evidence>